<sequence length="688" mass="79556">MGKKRRKHDGSGSSRSPSPDRIREARNPSQAEVAGFRAPPSGKPAMTVKQLREERQKLLHEHFGYSNTNNPFGDRLLAEPFVWKKKNQLLQAAGQKGKTTVAALIHSSKSKVQEIENVKRRREEREKEEELMQQQREELQREKEREHYEEYAQKEELFHRSNQLKKTEIRLEQNRAQLIDLIVKGLRIIKGERFEKMDVLPGPPHEVLETYKNEPVTVAMLEDLIADVKLHIDVDTTVVDADFQDFWKSLLVLAREALERAKKRKDVLDQLARNSSPQMAAEAAAQLADTVCPQIRDADTGIVLSVAHEIEGLLGGKSAAELDELEAQIRSKFEEEDIDVAYWEGILNKIPSFRARAVCLQTWHMMTQSAADAEREMAREKALKEEEEAKAARAKGEELEGLLLEEADARKLARAQQIKQDAIKVARSVEKDVNPNADGSFSPELEPYDEGEVPPPVRGPYSPQLWPFDEFRHAEILAPDDDEDRRAILKKTLIQKERLKRAGLEEDPEPTPEAAENDASLDVLDPAAKVTTYEEFVKKEKKNLEADEEVMASSSEHKLTMHYTWEEKYRPRKPRFFNRVKTGYSWNKYNTTHYDHDNPPPKVVQGYKFNIFYPDLIDKTKAPTWFLEPSDTPDTVIIRFHAGPPYEDIAFKILNQEWQLERFRGFRNVFDRGIMQLYFSFKRYIYRR</sequence>
<dbReference type="EMBL" id="AAYL02000165">
    <property type="protein sequence ID" value="ESS31603.1"/>
    <property type="molecule type" value="Genomic_DNA"/>
</dbReference>
<dbReference type="SMR" id="B6KG46"/>
<dbReference type="STRING" id="432359.B6KG46"/>
<dbReference type="PaxDb" id="5811-TGME49_044380"/>
<dbReference type="EnsemblProtists" id="ESS31603">
    <property type="protein sequence ID" value="ESS31603"/>
    <property type="gene ID" value="TGVEG_244380"/>
</dbReference>
<dbReference type="VEuPathDB" id="ToxoDB:TGVEG_244380"/>
<dbReference type="eggNOG" id="KOG2370">
    <property type="taxonomic scope" value="Eukaryota"/>
</dbReference>
<dbReference type="HOGENOM" id="CLU_011759_0_0_1"/>
<dbReference type="OMA" id="HIDFWND"/>
<dbReference type="Proteomes" id="UP000002226">
    <property type="component" value="Partially assembled WGS sequence"/>
</dbReference>
<dbReference type="GO" id="GO:0005737">
    <property type="term" value="C:cytoplasm"/>
    <property type="evidence" value="ECO:0007669"/>
    <property type="project" value="TreeGrafter"/>
</dbReference>
<dbReference type="GO" id="GO:0005634">
    <property type="term" value="C:nucleus"/>
    <property type="evidence" value="ECO:0000250"/>
    <property type="project" value="UniProtKB"/>
</dbReference>
<dbReference type="GO" id="GO:0005681">
    <property type="term" value="C:spliceosomal complex"/>
    <property type="evidence" value="ECO:0007669"/>
    <property type="project" value="TreeGrafter"/>
</dbReference>
<dbReference type="GO" id="GO:0030154">
    <property type="term" value="P:cell differentiation"/>
    <property type="evidence" value="ECO:0007669"/>
    <property type="project" value="UniProtKB-KW"/>
</dbReference>
<dbReference type="GO" id="GO:0045292">
    <property type="term" value="P:mRNA cis splicing, via spliceosome"/>
    <property type="evidence" value="ECO:0007669"/>
    <property type="project" value="TreeGrafter"/>
</dbReference>
<dbReference type="GO" id="GO:0000398">
    <property type="term" value="P:mRNA splicing, via spliceosome"/>
    <property type="evidence" value="ECO:0000250"/>
    <property type="project" value="UniProtKB"/>
</dbReference>
<dbReference type="GO" id="GO:0010971">
    <property type="term" value="P:positive regulation of G2/M transition of mitotic cell cycle"/>
    <property type="evidence" value="ECO:0000315"/>
    <property type="project" value="UniProtKB"/>
</dbReference>
<dbReference type="GO" id="GO:0051260">
    <property type="term" value="P:protein homooligomerization"/>
    <property type="evidence" value="ECO:0000314"/>
    <property type="project" value="UniProtKB"/>
</dbReference>
<dbReference type="GO" id="GO:0045595">
    <property type="term" value="P:regulation of cell differentiation"/>
    <property type="evidence" value="ECO:0000315"/>
    <property type="project" value="UniProtKB"/>
</dbReference>
<dbReference type="GO" id="GO:0010468">
    <property type="term" value="P:regulation of gene expression"/>
    <property type="evidence" value="ECO:0000315"/>
    <property type="project" value="UniProtKB"/>
</dbReference>
<dbReference type="InterPro" id="IPR019134">
    <property type="entry name" value="Cactin_C"/>
</dbReference>
<dbReference type="InterPro" id="IPR018816">
    <property type="entry name" value="Cactin_central"/>
</dbReference>
<dbReference type="PANTHER" id="PTHR21737">
    <property type="entry name" value="POLYGLUTAMINE BINDING PROTEIN 1/MARVEL MEMBRANE-ASSOCIATING DOMAIN CONTAINING 3"/>
    <property type="match status" value="1"/>
</dbReference>
<dbReference type="PANTHER" id="PTHR21737:SF4">
    <property type="entry name" value="SPLICING FACTOR CACTIN"/>
    <property type="match status" value="1"/>
</dbReference>
<dbReference type="Pfam" id="PF10312">
    <property type="entry name" value="Cactin_mid"/>
    <property type="match status" value="1"/>
</dbReference>
<dbReference type="Pfam" id="PF09732">
    <property type="entry name" value="CactinC_cactus"/>
    <property type="match status" value="1"/>
</dbReference>
<dbReference type="SMART" id="SM01050">
    <property type="entry name" value="CactinC_cactus"/>
    <property type="match status" value="1"/>
</dbReference>
<organism>
    <name type="scientific">Toxoplasma gondii (strain ATCC 50861 / VEG)</name>
    <dbReference type="NCBI Taxonomy" id="432359"/>
    <lineage>
        <taxon>Eukaryota</taxon>
        <taxon>Sar</taxon>
        <taxon>Alveolata</taxon>
        <taxon>Apicomplexa</taxon>
        <taxon>Conoidasida</taxon>
        <taxon>Coccidia</taxon>
        <taxon>Eucoccidiorida</taxon>
        <taxon>Eimeriorina</taxon>
        <taxon>Sarcocystidae</taxon>
        <taxon>Toxoplasma</taxon>
    </lineage>
</organism>
<protein>
    <recommendedName>
        <fullName evidence="5">Splicing factor Cactin</fullName>
    </recommendedName>
</protein>
<feature type="chain" id="PRO_0000419268" description="Splicing factor Cactin">
    <location>
        <begin position="1"/>
        <end position="688"/>
    </location>
</feature>
<feature type="region of interest" description="Disordered" evidence="3">
    <location>
        <begin position="1"/>
        <end position="49"/>
    </location>
</feature>
<feature type="region of interest" description="Disordered" evidence="3">
    <location>
        <begin position="431"/>
        <end position="454"/>
    </location>
</feature>
<feature type="coiled-coil region" evidence="2">
    <location>
        <begin position="108"/>
        <end position="182"/>
    </location>
</feature>
<feature type="coiled-coil region" evidence="2">
    <location>
        <begin position="248"/>
        <end position="275"/>
    </location>
</feature>
<feature type="coiled-coil region" evidence="2">
    <location>
        <begin position="365"/>
        <end position="406"/>
    </location>
</feature>
<feature type="mutagenesis site" description="Does not affect nuclear localization. Reduces self-oligomerization and inhibits G1 stage of the tachyzoite cell cycle." evidence="4">
    <original>Y</original>
    <variation>H</variation>
    <location>
        <position position="646"/>
    </location>
</feature>
<keyword id="KW-0131">Cell cycle</keyword>
<keyword id="KW-0175">Coiled coil</keyword>
<keyword id="KW-0221">Differentiation</keyword>
<keyword id="KW-0539">Nucleus</keyword>
<keyword id="KW-1185">Reference proteome</keyword>
<evidence type="ECO:0000250" key="1">
    <source>
        <dbReference type="UniProtKB" id="Q8WUQ7"/>
    </source>
</evidence>
<evidence type="ECO:0000255" key="2"/>
<evidence type="ECO:0000256" key="3">
    <source>
        <dbReference type="SAM" id="MobiDB-lite"/>
    </source>
</evidence>
<evidence type="ECO:0000269" key="4">
    <source>
    </source>
</evidence>
<evidence type="ECO:0000305" key="5"/>
<gene>
    <name type="primary">CACTIN</name>
    <name type="ORF">TGVEG_244380</name>
</gene>
<comment type="function">
    <text evidence="1 4">Plays a role in pre-mRNA splicing by facilitating excision of a subset of introns (By similarity). Involved in the regulation of G1 progression and stage differentiation of tachyzoites. May play a role in gene expression.</text>
</comment>
<comment type="subunit">
    <text evidence="4">Homooligomer; the oligomerization requires the C-terminus.</text>
</comment>
<comment type="subcellular location">
    <subcellularLocation>
        <location evidence="4">Nucleus</location>
    </subcellularLocation>
    <text evidence="4">Localizes in the nucleus throughout the entire tachyzoite cell cycle.</text>
</comment>
<comment type="similarity">
    <text evidence="5">Belongs to the CACTIN family.</text>
</comment>
<accession>B6KG46</accession>
<accession>V4Z8H8</accession>
<proteinExistence type="evidence at protein level"/>
<reference key="1">
    <citation type="submission" date="2008-03" db="EMBL/GenBank/DDBJ databases">
        <title>Annotation of Toxoplasma gondii VEG.</title>
        <authorList>
            <person name="Lorenzi H."/>
            <person name="Inman J."/>
            <person name="Amedeo P."/>
            <person name="Brunk B."/>
            <person name="Roos D."/>
            <person name="Caler E."/>
        </authorList>
    </citation>
    <scope>NUCLEOTIDE SEQUENCE [LARGE SCALE GENOMIC DNA]</scope>
    <source>
        <strain>ATCC 50861 / VEG</strain>
    </source>
</reference>
<reference key="2">
    <citation type="journal article" date="2012" name="Mol. Microbiol.">
        <title>Cactin is essential for G1 progression in Toxoplasma gondii.</title>
        <authorList>
            <person name="Szatanek T."/>
            <person name="Anderson-White B.R."/>
            <person name="Faugno-Fusci D.M."/>
            <person name="White M."/>
            <person name="Saeij J.P."/>
            <person name="Gubbels M.J."/>
        </authorList>
    </citation>
    <scope>FUNCTION</scope>
    <scope>SUBUNIT</scope>
    <scope>SUBCELLULAR LOCATION</scope>
    <scope>MUTAGENESIS OF TYR-646</scope>
</reference>
<name>CATIN_TOXGV</name>